<comment type="function">
    <text evidence="1">This enzyme is involved in nucleotide metabolism: it produces dUMP, the immediate precursor of thymidine nucleotides and it decreases the intracellular concentration of dUTP so that uracil cannot be incorporated into DNA.</text>
</comment>
<comment type="catalytic activity">
    <reaction evidence="1">
        <text>dUTP + H2O = dUMP + diphosphate + H(+)</text>
        <dbReference type="Rhea" id="RHEA:10248"/>
        <dbReference type="ChEBI" id="CHEBI:15377"/>
        <dbReference type="ChEBI" id="CHEBI:15378"/>
        <dbReference type="ChEBI" id="CHEBI:33019"/>
        <dbReference type="ChEBI" id="CHEBI:61555"/>
        <dbReference type="ChEBI" id="CHEBI:246422"/>
        <dbReference type="EC" id="3.6.1.23"/>
    </reaction>
</comment>
<comment type="pathway">
    <text evidence="1">Pyrimidine metabolism; dUMP biosynthesis; dUMP from dCTP (dUTP route): step 2/2.</text>
</comment>
<comment type="similarity">
    <text evidence="1">Belongs to the dCTP deaminase family. Archaeal dUTPase subfamily.</text>
</comment>
<proteinExistence type="inferred from homology"/>
<organism>
    <name type="scientific">Methanopyrus kandleri (strain AV19 / DSM 6324 / JCM 9639 / NBRC 100938)</name>
    <dbReference type="NCBI Taxonomy" id="190192"/>
    <lineage>
        <taxon>Archaea</taxon>
        <taxon>Methanobacteriati</taxon>
        <taxon>Methanobacteriota</taxon>
        <taxon>Methanomada group</taxon>
        <taxon>Methanopyri</taxon>
        <taxon>Methanopyrales</taxon>
        <taxon>Methanopyraceae</taxon>
        <taxon>Methanopyrus</taxon>
    </lineage>
</organism>
<feature type="chain" id="PRO_0000153639" description="Probable deoxyuridine 5'-triphosphate nucleotidohydrolase">
    <location>
        <begin position="1"/>
        <end position="154"/>
    </location>
</feature>
<name>DUT_METKA</name>
<protein>
    <recommendedName>
        <fullName evidence="1">Probable deoxyuridine 5'-triphosphate nucleotidohydrolase</fullName>
        <shortName evidence="1">dUTPase</shortName>
        <ecNumber evidence="1">3.6.1.23</ecNumber>
    </recommendedName>
    <alternativeName>
        <fullName evidence="1">dUTP pyrophosphatase</fullName>
    </alternativeName>
</protein>
<keyword id="KW-0378">Hydrolase</keyword>
<keyword id="KW-0546">Nucleotide metabolism</keyword>
<keyword id="KW-1185">Reference proteome</keyword>
<accession>Q8TV34</accession>
<dbReference type="EC" id="3.6.1.23" evidence="1"/>
<dbReference type="EMBL" id="AE009439">
    <property type="protein sequence ID" value="AAM02779.1"/>
    <property type="molecule type" value="Genomic_DNA"/>
</dbReference>
<dbReference type="RefSeq" id="WP_011019934.1">
    <property type="nucleotide sequence ID" value="NC_003551.1"/>
</dbReference>
<dbReference type="SMR" id="Q8TV34"/>
<dbReference type="FunCoup" id="Q8TV34">
    <property type="interactions" value="21"/>
</dbReference>
<dbReference type="STRING" id="190192.MK1566"/>
<dbReference type="PaxDb" id="190192-MK1566"/>
<dbReference type="EnsemblBacteria" id="AAM02779">
    <property type="protein sequence ID" value="AAM02779"/>
    <property type="gene ID" value="MK1566"/>
</dbReference>
<dbReference type="GeneID" id="1478161"/>
<dbReference type="KEGG" id="mka:MK1566"/>
<dbReference type="HOGENOM" id="CLU_103451_2_0_2"/>
<dbReference type="InParanoid" id="Q8TV34"/>
<dbReference type="UniPathway" id="UPA00610">
    <property type="reaction ID" value="UER00666"/>
</dbReference>
<dbReference type="Proteomes" id="UP000001826">
    <property type="component" value="Chromosome"/>
</dbReference>
<dbReference type="GO" id="GO:0008829">
    <property type="term" value="F:dCTP deaminase activity"/>
    <property type="evidence" value="ECO:0007669"/>
    <property type="project" value="InterPro"/>
</dbReference>
<dbReference type="GO" id="GO:0004170">
    <property type="term" value="F:dUTP diphosphatase activity"/>
    <property type="evidence" value="ECO:0007669"/>
    <property type="project" value="UniProtKB-UniRule"/>
</dbReference>
<dbReference type="GO" id="GO:0006226">
    <property type="term" value="P:dUMP biosynthetic process"/>
    <property type="evidence" value="ECO:0007669"/>
    <property type="project" value="UniProtKB-UniRule"/>
</dbReference>
<dbReference type="GO" id="GO:0006229">
    <property type="term" value="P:dUTP biosynthetic process"/>
    <property type="evidence" value="ECO:0007669"/>
    <property type="project" value="InterPro"/>
</dbReference>
<dbReference type="CDD" id="cd07557">
    <property type="entry name" value="trimeric_dUTPase"/>
    <property type="match status" value="1"/>
</dbReference>
<dbReference type="Gene3D" id="2.70.40.10">
    <property type="match status" value="1"/>
</dbReference>
<dbReference type="HAMAP" id="MF_00635">
    <property type="entry name" value="dUTPase_arch"/>
    <property type="match status" value="1"/>
</dbReference>
<dbReference type="InterPro" id="IPR011962">
    <property type="entry name" value="dCTP_deaminase"/>
</dbReference>
<dbReference type="InterPro" id="IPR036157">
    <property type="entry name" value="dUTPase-like_sf"/>
</dbReference>
<dbReference type="InterPro" id="IPR023537">
    <property type="entry name" value="dUTPase_archaeal"/>
</dbReference>
<dbReference type="InterPro" id="IPR033704">
    <property type="entry name" value="dUTPase_trimeric"/>
</dbReference>
<dbReference type="PANTHER" id="PTHR42680">
    <property type="entry name" value="DCTP DEAMINASE"/>
    <property type="match status" value="1"/>
</dbReference>
<dbReference type="PANTHER" id="PTHR42680:SF1">
    <property type="entry name" value="DEOXYURIDINE 5'-TRIPHOSPHATE NUCLEOTIDOHYDROLASE"/>
    <property type="match status" value="1"/>
</dbReference>
<dbReference type="Pfam" id="PF22769">
    <property type="entry name" value="DCD"/>
    <property type="match status" value="1"/>
</dbReference>
<dbReference type="SUPFAM" id="SSF51283">
    <property type="entry name" value="dUTPase-like"/>
    <property type="match status" value="1"/>
</dbReference>
<evidence type="ECO:0000255" key="1">
    <source>
        <dbReference type="HAMAP-Rule" id="MF_00635"/>
    </source>
</evidence>
<reference key="1">
    <citation type="journal article" date="2002" name="Proc. Natl. Acad. Sci. U.S.A.">
        <title>The complete genome of hyperthermophile Methanopyrus kandleri AV19 and monophyly of archaeal methanogens.</title>
        <authorList>
            <person name="Slesarev A.I."/>
            <person name="Mezhevaya K.V."/>
            <person name="Makarova K.S."/>
            <person name="Polushin N.N."/>
            <person name="Shcherbinina O.V."/>
            <person name="Shakhova V.V."/>
            <person name="Belova G.I."/>
            <person name="Aravind L."/>
            <person name="Natale D.A."/>
            <person name="Rogozin I.B."/>
            <person name="Tatusov R.L."/>
            <person name="Wolf Y.I."/>
            <person name="Stetter K.O."/>
            <person name="Malykh A.G."/>
            <person name="Koonin E.V."/>
            <person name="Kozyavkin S.A."/>
        </authorList>
    </citation>
    <scope>NUCLEOTIDE SEQUENCE [LARGE SCALE GENOMIC DNA]</scope>
    <source>
        <strain>AV19 / DSM 6324 / JCM 9639 / NBRC 100938</strain>
    </source>
</reference>
<sequence length="154" mass="17315">MILGEYVLRDLFPDLDEDQYQPAGIDLKLDRVFRLEGRGALLEGDDKRLPEYREVETEGGVFELEPNVPYVLELAPELEIPEDTAVLFLPRSTLLRSGVSVHTALGDPGFRGKIRVLAVNHHAAPYRIAHGERVVQAVFLRAEDAGRYEGDYGR</sequence>
<gene>
    <name evidence="1" type="primary">dut</name>
    <name type="ordered locus">MK1566</name>
</gene>